<gene>
    <name type="primary">LYZL4</name>
</gene>
<proteinExistence type="evidence at transcript level"/>
<organism>
    <name type="scientific">Bos taurus</name>
    <name type="common">Bovine</name>
    <dbReference type="NCBI Taxonomy" id="9913"/>
    <lineage>
        <taxon>Eukaryota</taxon>
        <taxon>Metazoa</taxon>
        <taxon>Chordata</taxon>
        <taxon>Craniata</taxon>
        <taxon>Vertebrata</taxon>
        <taxon>Euteleostomi</taxon>
        <taxon>Mammalia</taxon>
        <taxon>Eutheria</taxon>
        <taxon>Laurasiatheria</taxon>
        <taxon>Artiodactyla</taxon>
        <taxon>Ruminantia</taxon>
        <taxon>Pecora</taxon>
        <taxon>Bovidae</taxon>
        <taxon>Bovinae</taxon>
        <taxon>Bos</taxon>
    </lineage>
</organism>
<protein>
    <recommendedName>
        <fullName>Lysozyme-like protein 4</fullName>
        <shortName>Lysozyme-4</shortName>
    </recommendedName>
</protein>
<comment type="function">
    <text evidence="1 2">May be involved in fertilization (By similarity). Has no detectable bacteriolytic and lysozyme activities in vitro (By similarity).</text>
</comment>
<comment type="subunit">
    <text evidence="2">Monomer.</text>
</comment>
<comment type="subcellular location">
    <subcellularLocation>
        <location evidence="2">Secreted</location>
    </subcellularLocation>
    <subcellularLocation>
        <location evidence="2">Cytoplasmic vesicle</location>
        <location evidence="2">Secretory vesicle</location>
        <location evidence="2">Acrosome</location>
    </subcellularLocation>
    <subcellularLocation>
        <location evidence="2">Cell projection</location>
        <location evidence="2">Cilium</location>
        <location evidence="2">Flagellum</location>
    </subcellularLocation>
    <text evidence="2">Found in the principal piece of sperm tail.</text>
</comment>
<comment type="similarity">
    <text evidence="4">Belongs to the glycosyl hydrolase 22 family.</text>
</comment>
<comment type="caution">
    <text evidence="5">Although it belongs to the glycosyl hydrolase 22 family, Gly-72 is present instead of the conserved Asp which is an active site residue. It is therefore expected that this protein lacks hydrolase activity.</text>
</comment>
<reference key="1">
    <citation type="submission" date="2005-12" db="EMBL/GenBank/DDBJ databases">
        <authorList>
            <consortium name="NIH - Mammalian Gene Collection (MGC) project"/>
        </authorList>
    </citation>
    <scope>NUCLEOTIDE SEQUENCE [LARGE SCALE MRNA]</scope>
    <source>
        <strain>Crossbred X Angus</strain>
        <tissue>Liver</tissue>
    </source>
</reference>
<sequence length="145" mass="16293">MKASVVLSLIGYLVVPSDTAVLGRCVVAKKLHEGGLSDFEGYSLENWVCLAYFESKFNPMAVYENSRSDFIGYGLFQIRNHDWCDHGRNRCHMSCSALLNPDLKKTIECAKTIVKGKRGMGAWPSWTLNCQHSDTLARWLDGCKL</sequence>
<feature type="signal peptide" evidence="3">
    <location>
        <begin position="1"/>
        <end position="19"/>
    </location>
</feature>
<feature type="chain" id="PRO_0000287124" description="Lysozyme-like protein 4">
    <location>
        <begin position="20"/>
        <end position="145"/>
    </location>
</feature>
<feature type="domain" description="C-type lysozyme" evidence="4">
    <location>
        <begin position="20"/>
        <end position="145"/>
    </location>
</feature>
<feature type="active site" evidence="4">
    <location>
        <position position="54"/>
    </location>
</feature>
<feature type="disulfide bond" evidence="4">
    <location>
        <begin position="25"/>
        <end position="143"/>
    </location>
</feature>
<feature type="disulfide bond" evidence="4">
    <location>
        <begin position="49"/>
        <end position="130"/>
    </location>
</feature>
<feature type="disulfide bond" evidence="4">
    <location>
        <begin position="84"/>
        <end position="95"/>
    </location>
</feature>
<feature type="disulfide bond" evidence="4">
    <location>
        <begin position="91"/>
        <end position="109"/>
    </location>
</feature>
<accession>Q2T9N7</accession>
<keyword id="KW-0966">Cell projection</keyword>
<keyword id="KW-0969">Cilium</keyword>
<keyword id="KW-0968">Cytoplasmic vesicle</keyword>
<keyword id="KW-1015">Disulfide bond</keyword>
<keyword id="KW-0278">Fertilization</keyword>
<keyword id="KW-0282">Flagellum</keyword>
<keyword id="KW-1185">Reference proteome</keyword>
<keyword id="KW-0964">Secreted</keyword>
<keyword id="KW-0732">Signal</keyword>
<dbReference type="EMBL" id="BC111339">
    <property type="protein sequence ID" value="AAI11340.1"/>
    <property type="molecule type" value="mRNA"/>
</dbReference>
<dbReference type="RefSeq" id="NP_001071427.1">
    <property type="nucleotide sequence ID" value="NM_001077959.1"/>
</dbReference>
<dbReference type="RefSeq" id="XP_024838506.1">
    <property type="nucleotide sequence ID" value="XM_024982738.2"/>
</dbReference>
<dbReference type="RefSeq" id="XP_059735664.1">
    <property type="nucleotide sequence ID" value="XM_059879681.1"/>
</dbReference>
<dbReference type="SMR" id="Q2T9N7"/>
<dbReference type="FunCoup" id="Q2T9N7">
    <property type="interactions" value="29"/>
</dbReference>
<dbReference type="STRING" id="9913.ENSBTAP00000024756"/>
<dbReference type="CAZy" id="GH22">
    <property type="family name" value="Glycoside Hydrolase Family 22"/>
</dbReference>
<dbReference type="PaxDb" id="9913-ENSBTAP00000024756"/>
<dbReference type="Ensembl" id="ENSBTAT00000024756.5">
    <property type="protein sequence ID" value="ENSBTAP00000024756.5"/>
    <property type="gene ID" value="ENSBTAG00000018601.6"/>
</dbReference>
<dbReference type="GeneID" id="523887"/>
<dbReference type="KEGG" id="bta:523887"/>
<dbReference type="CTD" id="131375"/>
<dbReference type="VEuPathDB" id="HostDB:ENSBTAG00000018601"/>
<dbReference type="VGNC" id="VGNC:31117">
    <property type="gene designation" value="LYZL4"/>
</dbReference>
<dbReference type="eggNOG" id="ENOG502SSER">
    <property type="taxonomic scope" value="Eukaryota"/>
</dbReference>
<dbReference type="GeneTree" id="ENSGT00940000162293"/>
<dbReference type="InParanoid" id="Q2T9N7"/>
<dbReference type="OMA" id="AWPSWSL"/>
<dbReference type="OrthoDB" id="17373at2759"/>
<dbReference type="Proteomes" id="UP000009136">
    <property type="component" value="Chromosome 22"/>
</dbReference>
<dbReference type="Bgee" id="ENSBTAG00000018601">
    <property type="expression patterns" value="Expressed in semen and 15 other cell types or tissues"/>
</dbReference>
<dbReference type="GO" id="GO:0001669">
    <property type="term" value="C:acrosomal vesicle"/>
    <property type="evidence" value="ECO:0000250"/>
    <property type="project" value="UniProtKB"/>
</dbReference>
<dbReference type="GO" id="GO:0005615">
    <property type="term" value="C:extracellular space"/>
    <property type="evidence" value="ECO:0000250"/>
    <property type="project" value="UniProtKB"/>
</dbReference>
<dbReference type="GO" id="GO:0036126">
    <property type="term" value="C:sperm flagellum"/>
    <property type="evidence" value="ECO:0000250"/>
    <property type="project" value="UniProtKB"/>
</dbReference>
<dbReference type="GO" id="GO:0003796">
    <property type="term" value="F:lysozyme activity"/>
    <property type="evidence" value="ECO:0007669"/>
    <property type="project" value="InterPro"/>
</dbReference>
<dbReference type="GO" id="GO:0009566">
    <property type="term" value="P:fertilization"/>
    <property type="evidence" value="ECO:0000250"/>
    <property type="project" value="UniProtKB"/>
</dbReference>
<dbReference type="GO" id="GO:0007342">
    <property type="term" value="P:fusion of sperm to egg plasma membrane involved in single fertilization"/>
    <property type="evidence" value="ECO:0000318"/>
    <property type="project" value="GO_Central"/>
</dbReference>
<dbReference type="CDD" id="cd16897">
    <property type="entry name" value="LYZ_C"/>
    <property type="match status" value="1"/>
</dbReference>
<dbReference type="FunFam" id="1.10.530.10:FF:000001">
    <property type="entry name" value="Lysozyme C"/>
    <property type="match status" value="1"/>
</dbReference>
<dbReference type="Gene3D" id="1.10.530.10">
    <property type="match status" value="1"/>
</dbReference>
<dbReference type="InterPro" id="IPR001916">
    <property type="entry name" value="Glyco_hydro_22"/>
</dbReference>
<dbReference type="InterPro" id="IPR019799">
    <property type="entry name" value="Glyco_hydro_22_CS"/>
</dbReference>
<dbReference type="InterPro" id="IPR000974">
    <property type="entry name" value="Glyco_hydro_22_lys"/>
</dbReference>
<dbReference type="InterPro" id="IPR023346">
    <property type="entry name" value="Lysozyme-like_dom_sf"/>
</dbReference>
<dbReference type="PANTHER" id="PTHR11407">
    <property type="entry name" value="LYSOZYME C"/>
    <property type="match status" value="1"/>
</dbReference>
<dbReference type="PANTHER" id="PTHR11407:SF21">
    <property type="entry name" value="LYSOZYME-LIKE PROTEIN 4"/>
    <property type="match status" value="1"/>
</dbReference>
<dbReference type="Pfam" id="PF00062">
    <property type="entry name" value="Lys"/>
    <property type="match status" value="1"/>
</dbReference>
<dbReference type="PRINTS" id="PR00137">
    <property type="entry name" value="LYSOZYME"/>
</dbReference>
<dbReference type="PRINTS" id="PR00135">
    <property type="entry name" value="LYZLACT"/>
</dbReference>
<dbReference type="SMART" id="SM00263">
    <property type="entry name" value="LYZ1"/>
    <property type="match status" value="1"/>
</dbReference>
<dbReference type="SUPFAM" id="SSF53955">
    <property type="entry name" value="Lysozyme-like"/>
    <property type="match status" value="1"/>
</dbReference>
<dbReference type="PROSITE" id="PS00128">
    <property type="entry name" value="GLYCOSYL_HYDROL_F22_1"/>
    <property type="match status" value="1"/>
</dbReference>
<dbReference type="PROSITE" id="PS51348">
    <property type="entry name" value="GLYCOSYL_HYDROL_F22_2"/>
    <property type="match status" value="1"/>
</dbReference>
<evidence type="ECO:0000250" key="1">
    <source>
        <dbReference type="UniProtKB" id="D4ABW7"/>
    </source>
</evidence>
<evidence type="ECO:0000250" key="2">
    <source>
        <dbReference type="UniProtKB" id="Q9D925"/>
    </source>
</evidence>
<evidence type="ECO:0000255" key="3"/>
<evidence type="ECO:0000255" key="4">
    <source>
        <dbReference type="PROSITE-ProRule" id="PRU00680"/>
    </source>
</evidence>
<evidence type="ECO:0000305" key="5"/>
<name>LYZL4_BOVIN</name>